<organism>
    <name type="scientific">Bartonella henselae (strain ATCC 49882 / DSM 28221 / CCUG 30454 / Houston 1)</name>
    <name type="common">Rochalimaea henselae</name>
    <dbReference type="NCBI Taxonomy" id="283166"/>
    <lineage>
        <taxon>Bacteria</taxon>
        <taxon>Pseudomonadati</taxon>
        <taxon>Pseudomonadota</taxon>
        <taxon>Alphaproteobacteria</taxon>
        <taxon>Hyphomicrobiales</taxon>
        <taxon>Bartonellaceae</taxon>
        <taxon>Bartonella</taxon>
    </lineage>
</organism>
<protein>
    <recommendedName>
        <fullName evidence="1">Small ribosomal subunit protein bS6</fullName>
    </recommendedName>
    <alternativeName>
        <fullName evidence="3">30S ribosomal protein S6</fullName>
    </alternativeName>
</protein>
<evidence type="ECO:0000255" key="1">
    <source>
        <dbReference type="HAMAP-Rule" id="MF_00360"/>
    </source>
</evidence>
<evidence type="ECO:0000256" key="2">
    <source>
        <dbReference type="SAM" id="MobiDB-lite"/>
    </source>
</evidence>
<evidence type="ECO:0000305" key="3"/>
<comment type="function">
    <text evidence="1">Binds together with bS18 to 16S ribosomal RNA.</text>
</comment>
<comment type="similarity">
    <text evidence="1">Belongs to the bacterial ribosomal protein bS6 family.</text>
</comment>
<accession>Q6G446</accession>
<name>RS6_BARHE</name>
<gene>
    <name evidence="1" type="primary">rpsF</name>
    <name type="ordered locus">BH05320</name>
</gene>
<proteinExistence type="inferred from homology"/>
<dbReference type="EMBL" id="BX897699">
    <property type="protein sequence ID" value="CAF27340.1"/>
    <property type="molecule type" value="Genomic_DNA"/>
</dbReference>
<dbReference type="RefSeq" id="WP_011180462.1">
    <property type="nucleotide sequence ID" value="NZ_LRIJ02000001.1"/>
</dbReference>
<dbReference type="SMR" id="Q6G446"/>
<dbReference type="PaxDb" id="283166-BH05320"/>
<dbReference type="EnsemblBacteria" id="CAF27340">
    <property type="protein sequence ID" value="CAF27340"/>
    <property type="gene ID" value="BH05320"/>
</dbReference>
<dbReference type="GeneID" id="92985188"/>
<dbReference type="KEGG" id="bhe:BH05320"/>
<dbReference type="eggNOG" id="COG0360">
    <property type="taxonomic scope" value="Bacteria"/>
</dbReference>
<dbReference type="OrthoDB" id="9812702at2"/>
<dbReference type="Proteomes" id="UP000000421">
    <property type="component" value="Chromosome"/>
</dbReference>
<dbReference type="GO" id="GO:0022627">
    <property type="term" value="C:cytosolic small ribosomal subunit"/>
    <property type="evidence" value="ECO:0007669"/>
    <property type="project" value="TreeGrafter"/>
</dbReference>
<dbReference type="GO" id="GO:0070181">
    <property type="term" value="F:small ribosomal subunit rRNA binding"/>
    <property type="evidence" value="ECO:0007669"/>
    <property type="project" value="TreeGrafter"/>
</dbReference>
<dbReference type="GO" id="GO:0003735">
    <property type="term" value="F:structural constituent of ribosome"/>
    <property type="evidence" value="ECO:0007669"/>
    <property type="project" value="InterPro"/>
</dbReference>
<dbReference type="GO" id="GO:0006412">
    <property type="term" value="P:translation"/>
    <property type="evidence" value="ECO:0007669"/>
    <property type="project" value="UniProtKB-UniRule"/>
</dbReference>
<dbReference type="CDD" id="cd00473">
    <property type="entry name" value="bS6"/>
    <property type="match status" value="1"/>
</dbReference>
<dbReference type="Gene3D" id="3.30.70.60">
    <property type="match status" value="1"/>
</dbReference>
<dbReference type="HAMAP" id="MF_00360">
    <property type="entry name" value="Ribosomal_bS6"/>
    <property type="match status" value="1"/>
</dbReference>
<dbReference type="InterPro" id="IPR000529">
    <property type="entry name" value="Ribosomal_bS6"/>
</dbReference>
<dbReference type="InterPro" id="IPR035980">
    <property type="entry name" value="Ribosomal_bS6_sf"/>
</dbReference>
<dbReference type="InterPro" id="IPR020814">
    <property type="entry name" value="Ribosomal_S6_plastid/chlpt"/>
</dbReference>
<dbReference type="InterPro" id="IPR014717">
    <property type="entry name" value="Transl_elong_EF1B/ribsomal_bS6"/>
</dbReference>
<dbReference type="NCBIfam" id="TIGR00166">
    <property type="entry name" value="S6"/>
    <property type="match status" value="1"/>
</dbReference>
<dbReference type="PANTHER" id="PTHR21011">
    <property type="entry name" value="MITOCHONDRIAL 28S RIBOSOMAL PROTEIN S6"/>
    <property type="match status" value="1"/>
</dbReference>
<dbReference type="PANTHER" id="PTHR21011:SF1">
    <property type="entry name" value="SMALL RIBOSOMAL SUBUNIT PROTEIN BS6M"/>
    <property type="match status" value="1"/>
</dbReference>
<dbReference type="Pfam" id="PF01250">
    <property type="entry name" value="Ribosomal_S6"/>
    <property type="match status" value="1"/>
</dbReference>
<dbReference type="SUPFAM" id="SSF54995">
    <property type="entry name" value="Ribosomal protein S6"/>
    <property type="match status" value="1"/>
</dbReference>
<reference key="1">
    <citation type="journal article" date="2004" name="Proc. Natl. Acad. Sci. U.S.A.">
        <title>The louse-borne human pathogen Bartonella quintana is a genomic derivative of the zoonotic agent Bartonella henselae.</title>
        <authorList>
            <person name="Alsmark U.C.M."/>
            <person name="Frank A.C."/>
            <person name="Karlberg E.O."/>
            <person name="Legault B.-A."/>
            <person name="Ardell D.H."/>
            <person name="Canbaeck B."/>
            <person name="Eriksson A.-S."/>
            <person name="Naeslund A.K."/>
            <person name="Handley S.A."/>
            <person name="Huvet M."/>
            <person name="La Scola B."/>
            <person name="Holmberg M."/>
            <person name="Andersson S.G.E."/>
        </authorList>
    </citation>
    <scope>NUCLEOTIDE SEQUENCE [LARGE SCALE GENOMIC DNA]</scope>
    <source>
        <strain>ATCC 49882 / DSM 28221 / CCUG 30454 / Houston 1</strain>
    </source>
</reference>
<keyword id="KW-0687">Ribonucleoprotein</keyword>
<keyword id="KW-0689">Ribosomal protein</keyword>
<keyword id="KW-0694">RNA-binding</keyword>
<keyword id="KW-0699">rRNA-binding</keyword>
<sequence length="135" mass="15848">MALYEHMFLARQDIAPQQVDELLNIYKGVIETYGGKVGRVENWGLRPLAYRIRKNRKAYYVLVNIDAPATAIAEVERQMRINEDILRYMTIRVEKHEKEKSAMFSRLDRNGHIGHDEKHPRSPSRQREDVIEGVE</sequence>
<feature type="chain" id="PRO_0000176728" description="Small ribosomal subunit protein bS6">
    <location>
        <begin position="1"/>
        <end position="135"/>
    </location>
</feature>
<feature type="region of interest" description="Disordered" evidence="2">
    <location>
        <begin position="104"/>
        <end position="135"/>
    </location>
</feature>